<proteinExistence type="inferred from homology"/>
<comment type="catalytic activity">
    <reaction evidence="1">
        <text>urea + 2 H2O + H(+) = hydrogencarbonate + 2 NH4(+)</text>
        <dbReference type="Rhea" id="RHEA:20557"/>
        <dbReference type="ChEBI" id="CHEBI:15377"/>
        <dbReference type="ChEBI" id="CHEBI:15378"/>
        <dbReference type="ChEBI" id="CHEBI:16199"/>
        <dbReference type="ChEBI" id="CHEBI:17544"/>
        <dbReference type="ChEBI" id="CHEBI:28938"/>
        <dbReference type="EC" id="3.5.1.5"/>
    </reaction>
</comment>
<comment type="cofactor">
    <cofactor evidence="1">
        <name>Ni cation</name>
        <dbReference type="ChEBI" id="CHEBI:25516"/>
    </cofactor>
    <text evidence="1">Binds 2 nickel ions per subunit.</text>
</comment>
<comment type="pathway">
    <text evidence="1">Nitrogen metabolism; urea degradation; CO(2) and NH(3) from urea (urease route): step 1/1.</text>
</comment>
<comment type="subunit">
    <text evidence="1">Heterotrimer of UreA (gamma), UreB (beta) and UreC (alpha) subunits. Three heterotrimers associate to form the active enzyme.</text>
</comment>
<comment type="subcellular location">
    <subcellularLocation>
        <location evidence="1">Cytoplasm</location>
    </subcellularLocation>
</comment>
<comment type="PTM">
    <text evidence="1">Carboxylation allows a single lysine to coordinate two nickel ions.</text>
</comment>
<comment type="similarity">
    <text evidence="1">Belongs to the metallo-dependent hydrolases superfamily. Urease alpha subunit family.</text>
</comment>
<name>URE1_HALH5</name>
<gene>
    <name evidence="1" type="primary">ureC</name>
    <name type="ordered locus">BH0254</name>
</gene>
<protein>
    <recommendedName>
        <fullName evidence="1">Urease subunit alpha</fullName>
        <ecNumber evidence="1">3.5.1.5</ecNumber>
    </recommendedName>
    <alternativeName>
        <fullName evidence="1">Urea amidohydrolase subunit alpha</fullName>
    </alternativeName>
</protein>
<dbReference type="EC" id="3.5.1.5" evidence="1"/>
<dbReference type="EMBL" id="BA000004">
    <property type="protein sequence ID" value="BAB03973.1"/>
    <property type="molecule type" value="Genomic_DNA"/>
</dbReference>
<dbReference type="PIR" id="F83681">
    <property type="entry name" value="F83681"/>
</dbReference>
<dbReference type="RefSeq" id="WP_010896436.1">
    <property type="nucleotide sequence ID" value="NC_002570.2"/>
</dbReference>
<dbReference type="SMR" id="Q9KG59"/>
<dbReference type="STRING" id="272558.gene:10726099"/>
<dbReference type="MEROPS" id="M38.982"/>
<dbReference type="KEGG" id="bha:BH0254"/>
<dbReference type="eggNOG" id="COG0804">
    <property type="taxonomic scope" value="Bacteria"/>
</dbReference>
<dbReference type="HOGENOM" id="CLU_000980_0_0_9"/>
<dbReference type="OrthoDB" id="9802793at2"/>
<dbReference type="UniPathway" id="UPA00258">
    <property type="reaction ID" value="UER00370"/>
</dbReference>
<dbReference type="Proteomes" id="UP000001258">
    <property type="component" value="Chromosome"/>
</dbReference>
<dbReference type="GO" id="GO:0005737">
    <property type="term" value="C:cytoplasm"/>
    <property type="evidence" value="ECO:0007669"/>
    <property type="project" value="UniProtKB-SubCell"/>
</dbReference>
<dbReference type="GO" id="GO:0016151">
    <property type="term" value="F:nickel cation binding"/>
    <property type="evidence" value="ECO:0007669"/>
    <property type="project" value="UniProtKB-UniRule"/>
</dbReference>
<dbReference type="GO" id="GO:0009039">
    <property type="term" value="F:urease activity"/>
    <property type="evidence" value="ECO:0007669"/>
    <property type="project" value="UniProtKB-UniRule"/>
</dbReference>
<dbReference type="GO" id="GO:0043419">
    <property type="term" value="P:urea catabolic process"/>
    <property type="evidence" value="ECO:0007669"/>
    <property type="project" value="UniProtKB-UniRule"/>
</dbReference>
<dbReference type="CDD" id="cd00375">
    <property type="entry name" value="Urease_alpha"/>
    <property type="match status" value="1"/>
</dbReference>
<dbReference type="Gene3D" id="3.20.20.140">
    <property type="entry name" value="Metal-dependent hydrolases"/>
    <property type="match status" value="1"/>
</dbReference>
<dbReference type="Gene3D" id="2.30.40.10">
    <property type="entry name" value="Urease, subunit C, domain 1"/>
    <property type="match status" value="1"/>
</dbReference>
<dbReference type="HAMAP" id="MF_01953">
    <property type="entry name" value="Urease_alpha"/>
    <property type="match status" value="1"/>
</dbReference>
<dbReference type="InterPro" id="IPR006680">
    <property type="entry name" value="Amidohydro-rel"/>
</dbReference>
<dbReference type="InterPro" id="IPR011059">
    <property type="entry name" value="Metal-dep_hydrolase_composite"/>
</dbReference>
<dbReference type="InterPro" id="IPR032466">
    <property type="entry name" value="Metal_Hydrolase"/>
</dbReference>
<dbReference type="InterPro" id="IPR011612">
    <property type="entry name" value="Urease_alpha_N_dom"/>
</dbReference>
<dbReference type="InterPro" id="IPR050112">
    <property type="entry name" value="Urease_alpha_subunit"/>
</dbReference>
<dbReference type="InterPro" id="IPR017950">
    <property type="entry name" value="Urease_AS"/>
</dbReference>
<dbReference type="InterPro" id="IPR005848">
    <property type="entry name" value="Urease_asu"/>
</dbReference>
<dbReference type="InterPro" id="IPR017951">
    <property type="entry name" value="Urease_asu_c"/>
</dbReference>
<dbReference type="InterPro" id="IPR029754">
    <property type="entry name" value="Urease_Ni-bd"/>
</dbReference>
<dbReference type="NCBIfam" id="NF009685">
    <property type="entry name" value="PRK13206.1"/>
    <property type="match status" value="1"/>
</dbReference>
<dbReference type="NCBIfam" id="NF009686">
    <property type="entry name" value="PRK13207.1"/>
    <property type="match status" value="1"/>
</dbReference>
<dbReference type="NCBIfam" id="TIGR01792">
    <property type="entry name" value="urease_alph"/>
    <property type="match status" value="1"/>
</dbReference>
<dbReference type="PANTHER" id="PTHR43440">
    <property type="entry name" value="UREASE"/>
    <property type="match status" value="1"/>
</dbReference>
<dbReference type="PANTHER" id="PTHR43440:SF1">
    <property type="entry name" value="UREASE"/>
    <property type="match status" value="1"/>
</dbReference>
<dbReference type="Pfam" id="PF01979">
    <property type="entry name" value="Amidohydro_1"/>
    <property type="match status" value="1"/>
</dbReference>
<dbReference type="Pfam" id="PF00449">
    <property type="entry name" value="Urease_alpha"/>
    <property type="match status" value="1"/>
</dbReference>
<dbReference type="PRINTS" id="PR01752">
    <property type="entry name" value="UREASE"/>
</dbReference>
<dbReference type="SUPFAM" id="SSF51338">
    <property type="entry name" value="Composite domain of metallo-dependent hydrolases"/>
    <property type="match status" value="2"/>
</dbReference>
<dbReference type="SUPFAM" id="SSF51556">
    <property type="entry name" value="Metallo-dependent hydrolases"/>
    <property type="match status" value="1"/>
</dbReference>
<dbReference type="PROSITE" id="PS01120">
    <property type="entry name" value="UREASE_1"/>
    <property type="match status" value="1"/>
</dbReference>
<dbReference type="PROSITE" id="PS00145">
    <property type="entry name" value="UREASE_2"/>
    <property type="match status" value="1"/>
</dbReference>
<dbReference type="PROSITE" id="PS51368">
    <property type="entry name" value="UREASE_3"/>
    <property type="match status" value="1"/>
</dbReference>
<evidence type="ECO:0000255" key="1">
    <source>
        <dbReference type="HAMAP-Rule" id="MF_01953"/>
    </source>
</evidence>
<reference key="1">
    <citation type="journal article" date="2000" name="Nucleic Acids Res.">
        <title>Complete genome sequence of the alkaliphilic bacterium Bacillus halodurans and genomic sequence comparison with Bacillus subtilis.</title>
        <authorList>
            <person name="Takami H."/>
            <person name="Nakasone K."/>
            <person name="Takaki Y."/>
            <person name="Maeno G."/>
            <person name="Sasaki R."/>
            <person name="Masui N."/>
            <person name="Fuji F."/>
            <person name="Hirama C."/>
            <person name="Nakamura Y."/>
            <person name="Ogasawara N."/>
            <person name="Kuhara S."/>
            <person name="Horikoshi K."/>
        </authorList>
    </citation>
    <scope>NUCLEOTIDE SEQUENCE [LARGE SCALE GENOMIC DNA]</scope>
    <source>
        <strain>ATCC BAA-125 / DSM 18197 / FERM 7344 / JCM 9153 / C-125</strain>
    </source>
</reference>
<organism>
    <name type="scientific">Halalkalibacterium halodurans (strain ATCC BAA-125 / DSM 18197 / FERM 7344 / JCM 9153 / C-125)</name>
    <name type="common">Bacillus halodurans</name>
    <dbReference type="NCBI Taxonomy" id="272558"/>
    <lineage>
        <taxon>Bacteria</taxon>
        <taxon>Bacillati</taxon>
        <taxon>Bacillota</taxon>
        <taxon>Bacilli</taxon>
        <taxon>Bacillales</taxon>
        <taxon>Bacillaceae</taxon>
        <taxon>Halalkalibacterium (ex Joshi et al. 2022)</taxon>
    </lineage>
</organism>
<accession>Q9KG59</accession>
<keyword id="KW-0963">Cytoplasm</keyword>
<keyword id="KW-0378">Hydrolase</keyword>
<keyword id="KW-0479">Metal-binding</keyword>
<keyword id="KW-0533">Nickel</keyword>
<keyword id="KW-1185">Reference proteome</keyword>
<sequence length="571" mass="61292">MKLTRAQHASLYGPTVGDKVRLADTDLLLEIEKDYTVYGDECKFGGGKVLRDGMGQSAVYTRDEGVLDLIITNATIIDYTGIVKADIGIKDGHIVGIGKGGNPDIMDGVESHMIVGASTEAIAGEGLIVTAGGIDAHIHFISPQQIDVAIASGITTMLGGGTGPATGTKATTCTPGKWNIERMLEAADAFPVNLGFLGKGNASTPAPLREQIEAGAIGLKLHEDWGTTPAAIRTCLSVADRMDVQVAIHTDTLNEAGFVEDTIKAIGDRVIHTYHTEGAGGGHAPDIMKVAGLPNVLPSSTNPTRPFTVNTIDEHLDMLMVCHHLDPNVPEDVAFADSRIRPETIAAEDILQDLGVISMISSDSQAMGRVGEVIIRTWQTADKMKKQRGALAEDQGKGNDNVRIKRYVSKYTINPAITHGIDDYVGSVEVGKLADLVLWDPRFFGVKPELILKGGLIAYSQMGDPNASIPTPQPVFSRPMFGSFGRARGTTSITFLSKAAMDLGVHEALGLQKKIAHVKNCRSISKRSMKYNDATPNIEIDPETYEVKVDGEMITCKPFEEVALAQRYFLF</sequence>
<feature type="chain" id="PRO_0000234133" description="Urease subunit alpha">
    <location>
        <begin position="1"/>
        <end position="571"/>
    </location>
</feature>
<feature type="domain" description="Urease" evidence="1">
    <location>
        <begin position="132"/>
        <end position="571"/>
    </location>
</feature>
<feature type="active site" description="Proton donor" evidence="1">
    <location>
        <position position="323"/>
    </location>
</feature>
<feature type="binding site" evidence="1">
    <location>
        <position position="137"/>
    </location>
    <ligand>
        <name>Ni(2+)</name>
        <dbReference type="ChEBI" id="CHEBI:49786"/>
        <label>1</label>
    </ligand>
</feature>
<feature type="binding site" evidence="1">
    <location>
        <position position="139"/>
    </location>
    <ligand>
        <name>Ni(2+)</name>
        <dbReference type="ChEBI" id="CHEBI:49786"/>
        <label>1</label>
    </ligand>
</feature>
<feature type="binding site" description="via carbamate group" evidence="1">
    <location>
        <position position="220"/>
    </location>
    <ligand>
        <name>Ni(2+)</name>
        <dbReference type="ChEBI" id="CHEBI:49786"/>
        <label>1</label>
    </ligand>
</feature>
<feature type="binding site" description="via carbamate group" evidence="1">
    <location>
        <position position="220"/>
    </location>
    <ligand>
        <name>Ni(2+)</name>
        <dbReference type="ChEBI" id="CHEBI:49786"/>
        <label>2</label>
    </ligand>
</feature>
<feature type="binding site" evidence="1">
    <location>
        <position position="222"/>
    </location>
    <ligand>
        <name>substrate</name>
    </ligand>
</feature>
<feature type="binding site" evidence="1">
    <location>
        <position position="249"/>
    </location>
    <ligand>
        <name>Ni(2+)</name>
        <dbReference type="ChEBI" id="CHEBI:49786"/>
        <label>2</label>
    </ligand>
</feature>
<feature type="binding site" evidence="1">
    <location>
        <position position="275"/>
    </location>
    <ligand>
        <name>Ni(2+)</name>
        <dbReference type="ChEBI" id="CHEBI:49786"/>
        <label>2</label>
    </ligand>
</feature>
<feature type="binding site" evidence="1">
    <location>
        <position position="363"/>
    </location>
    <ligand>
        <name>Ni(2+)</name>
        <dbReference type="ChEBI" id="CHEBI:49786"/>
        <label>1</label>
    </ligand>
</feature>
<feature type="modified residue" description="N6-carboxylysine" evidence="1">
    <location>
        <position position="220"/>
    </location>
</feature>